<reference key="1">
    <citation type="journal article" date="2007" name="PLoS Genet.">
        <title>The complete genome sequence of Yersinia pseudotuberculosis IP31758, the causative agent of Far East scarlet-like fever.</title>
        <authorList>
            <person name="Eppinger M."/>
            <person name="Rosovitz M.J."/>
            <person name="Fricke W.F."/>
            <person name="Rasko D.A."/>
            <person name="Kokorina G."/>
            <person name="Fayolle C."/>
            <person name="Lindler L.E."/>
            <person name="Carniel E."/>
            <person name="Ravel J."/>
        </authorList>
    </citation>
    <scope>NUCLEOTIDE SEQUENCE [LARGE SCALE GENOMIC DNA]</scope>
    <source>
        <strain>IP 31758</strain>
    </source>
</reference>
<dbReference type="EMBL" id="CP000720">
    <property type="protein sequence ID" value="ABS46265.1"/>
    <property type="molecule type" value="Genomic_DNA"/>
</dbReference>
<dbReference type="RefSeq" id="WP_002211315.1">
    <property type="nucleotide sequence ID" value="NC_009708.1"/>
</dbReference>
<dbReference type="SMR" id="A7FJV9"/>
<dbReference type="KEGG" id="ypi:YpsIP31758_2572"/>
<dbReference type="HOGENOM" id="CLU_155659_3_1_6"/>
<dbReference type="Proteomes" id="UP000002412">
    <property type="component" value="Chromosome"/>
</dbReference>
<dbReference type="GO" id="GO:0005829">
    <property type="term" value="C:cytosol"/>
    <property type="evidence" value="ECO:0007669"/>
    <property type="project" value="TreeGrafter"/>
</dbReference>
<dbReference type="FunFam" id="2.20.25.10:FF:000002">
    <property type="entry name" value="UPF0434 protein YcaR"/>
    <property type="match status" value="1"/>
</dbReference>
<dbReference type="Gene3D" id="2.20.25.10">
    <property type="match status" value="1"/>
</dbReference>
<dbReference type="HAMAP" id="MF_01187">
    <property type="entry name" value="UPF0434"/>
    <property type="match status" value="1"/>
</dbReference>
<dbReference type="InterPro" id="IPR005651">
    <property type="entry name" value="Trm112-like"/>
</dbReference>
<dbReference type="PANTHER" id="PTHR33505:SF4">
    <property type="entry name" value="PROTEIN PREY, MITOCHONDRIAL"/>
    <property type="match status" value="1"/>
</dbReference>
<dbReference type="PANTHER" id="PTHR33505">
    <property type="entry name" value="ZGC:162634"/>
    <property type="match status" value="1"/>
</dbReference>
<dbReference type="Pfam" id="PF03966">
    <property type="entry name" value="Trm112p"/>
    <property type="match status" value="1"/>
</dbReference>
<dbReference type="SUPFAM" id="SSF158997">
    <property type="entry name" value="Trm112p-like"/>
    <property type="match status" value="1"/>
</dbReference>
<accession>A7FJV9</accession>
<feature type="chain" id="PRO_1000065860" description="UPF0434 protein YpsIP31758_2572">
    <location>
        <begin position="1"/>
        <end position="60"/>
    </location>
</feature>
<evidence type="ECO:0000255" key="1">
    <source>
        <dbReference type="HAMAP-Rule" id="MF_01187"/>
    </source>
</evidence>
<proteinExistence type="inferred from homology"/>
<name>Y2572_YERP3</name>
<organism>
    <name type="scientific">Yersinia pseudotuberculosis serotype O:1b (strain IP 31758)</name>
    <dbReference type="NCBI Taxonomy" id="349747"/>
    <lineage>
        <taxon>Bacteria</taxon>
        <taxon>Pseudomonadati</taxon>
        <taxon>Pseudomonadota</taxon>
        <taxon>Gammaproteobacteria</taxon>
        <taxon>Enterobacterales</taxon>
        <taxon>Yersiniaceae</taxon>
        <taxon>Yersinia</taxon>
    </lineage>
</organism>
<comment type="similarity">
    <text evidence="1">Belongs to the UPF0434 family.</text>
</comment>
<gene>
    <name type="ordered locus">YpsIP31758_2572</name>
</gene>
<sequence length="60" mass="6820">MDHRLLEIVACPVCNGKLYFNKENLELVCKVDNLAYPVRDGIPVLLENEARPLSIDEKHA</sequence>
<protein>
    <recommendedName>
        <fullName evidence="1">UPF0434 protein YpsIP31758_2572</fullName>
    </recommendedName>
</protein>